<proteinExistence type="inferred from homology"/>
<protein>
    <recommendedName>
        <fullName evidence="1">Holliday junction branch migration complex subunit RuvB</fullName>
        <ecNumber evidence="1">3.6.4.-</ecNumber>
    </recommendedName>
</protein>
<gene>
    <name evidence="1" type="primary">ruvB</name>
    <name type="ordered locus">P9515_18041</name>
</gene>
<organism>
    <name type="scientific">Prochlorococcus marinus (strain MIT 9515)</name>
    <dbReference type="NCBI Taxonomy" id="167542"/>
    <lineage>
        <taxon>Bacteria</taxon>
        <taxon>Bacillati</taxon>
        <taxon>Cyanobacteriota</taxon>
        <taxon>Cyanophyceae</taxon>
        <taxon>Synechococcales</taxon>
        <taxon>Prochlorococcaceae</taxon>
        <taxon>Prochlorococcus</taxon>
    </lineage>
</organism>
<reference key="1">
    <citation type="journal article" date="2007" name="PLoS Genet.">
        <title>Patterns and implications of gene gain and loss in the evolution of Prochlorococcus.</title>
        <authorList>
            <person name="Kettler G.C."/>
            <person name="Martiny A.C."/>
            <person name="Huang K."/>
            <person name="Zucker J."/>
            <person name="Coleman M.L."/>
            <person name="Rodrigue S."/>
            <person name="Chen F."/>
            <person name="Lapidus A."/>
            <person name="Ferriera S."/>
            <person name="Johnson J."/>
            <person name="Steglich C."/>
            <person name="Church G.M."/>
            <person name="Richardson P."/>
            <person name="Chisholm S.W."/>
        </authorList>
    </citation>
    <scope>NUCLEOTIDE SEQUENCE [LARGE SCALE GENOMIC DNA]</scope>
    <source>
        <strain>MIT 9515</strain>
    </source>
</reference>
<name>RUVB_PROM5</name>
<keyword id="KW-0067">ATP-binding</keyword>
<keyword id="KW-0963">Cytoplasm</keyword>
<keyword id="KW-0227">DNA damage</keyword>
<keyword id="KW-0233">DNA recombination</keyword>
<keyword id="KW-0234">DNA repair</keyword>
<keyword id="KW-0238">DNA-binding</keyword>
<keyword id="KW-0378">Hydrolase</keyword>
<keyword id="KW-0547">Nucleotide-binding</keyword>
<sequence length="352" mass="39762">MAIISSSLDESNIPRSRKELRLVDSKIIADEKINKNLNIVRPTSFKEFIGQEQIKSSLKIAIDASKYRKEALEHTLLYGQPGLGKTTLALLISYEMNSKCRVASAPSIERPRDIVGLLLGLKEGEILFIDEIHRLNKLTEELLYSAMEDFRLDLTMGANRGARCRTINLPKFTLIGATTKLASISAPLRDRFGLCHKIEFYSNDELKQIIFNFSNLINLQLDSDACCSLAKISRGTPRIALRLLKRVRDYAQVMKKTNKISIEIIEKALDSQKIDNRGLDNVDRKFLSFLKLNNNNPIGLDSIAAGMGEESSMLEFVVEPYLIQIGFIMRTPRGRKLTSLGKKYISSNNEKY</sequence>
<comment type="function">
    <text evidence="1">The RuvA-RuvB-RuvC complex processes Holliday junction (HJ) DNA during genetic recombination and DNA repair, while the RuvA-RuvB complex plays an important role in the rescue of blocked DNA replication forks via replication fork reversal (RFR). RuvA specifically binds to HJ cruciform DNA, conferring on it an open structure. The RuvB hexamer acts as an ATP-dependent pump, pulling dsDNA into and through the RuvAB complex. RuvB forms 2 homohexamers on either side of HJ DNA bound by 1 or 2 RuvA tetramers; 4 subunits per hexamer contact DNA at a time. Coordinated motions by a converter formed by DNA-disengaged RuvB subunits stimulates ATP hydrolysis and nucleotide exchange. Immobilization of the converter enables RuvB to convert the ATP-contained energy into a lever motion, pulling 2 nucleotides of DNA out of the RuvA tetramer per ATP hydrolyzed, thus driving DNA branch migration. The RuvB motors rotate together with the DNA substrate, which together with the progressing nucleotide cycle form the mechanistic basis for DNA recombination by continuous HJ branch migration. Branch migration allows RuvC to scan DNA until it finds its consensus sequence, where it cleaves and resolves cruciform DNA.</text>
</comment>
<comment type="catalytic activity">
    <reaction evidence="1">
        <text>ATP + H2O = ADP + phosphate + H(+)</text>
        <dbReference type="Rhea" id="RHEA:13065"/>
        <dbReference type="ChEBI" id="CHEBI:15377"/>
        <dbReference type="ChEBI" id="CHEBI:15378"/>
        <dbReference type="ChEBI" id="CHEBI:30616"/>
        <dbReference type="ChEBI" id="CHEBI:43474"/>
        <dbReference type="ChEBI" id="CHEBI:456216"/>
    </reaction>
</comment>
<comment type="subunit">
    <text evidence="1">Homohexamer. Forms an RuvA(8)-RuvB(12)-Holliday junction (HJ) complex. HJ DNA is sandwiched between 2 RuvA tetramers; dsDNA enters through RuvA and exits via RuvB. An RuvB hexamer assembles on each DNA strand where it exits the tetramer. Each RuvB hexamer is contacted by two RuvA subunits (via domain III) on 2 adjacent RuvB subunits; this complex drives branch migration. In the full resolvosome a probable DNA-RuvA(4)-RuvB(12)-RuvC(2) complex forms which resolves the HJ.</text>
</comment>
<comment type="subcellular location">
    <subcellularLocation>
        <location evidence="1">Cytoplasm</location>
    </subcellularLocation>
</comment>
<comment type="domain">
    <text evidence="1">Has 3 domains, the large (RuvB-L) and small ATPase (RuvB-S) domains and the C-terminal head (RuvB-H) domain. The head domain binds DNA, while the ATPase domains jointly bind ATP, ADP or are empty depending on the state of the subunit in the translocation cycle. During a single DNA translocation step the structure of each domain remains the same, but their relative positions change.</text>
</comment>
<comment type="similarity">
    <text evidence="1">Belongs to the RuvB family.</text>
</comment>
<feature type="chain" id="PRO_1000001443" description="Holliday junction branch migration complex subunit RuvB">
    <location>
        <begin position="1"/>
        <end position="352"/>
    </location>
</feature>
<feature type="region of interest" description="Large ATPase domain (RuvB-L)" evidence="1">
    <location>
        <begin position="13"/>
        <end position="201"/>
    </location>
</feature>
<feature type="region of interest" description="Small ATPAse domain (RuvB-S)" evidence="1">
    <location>
        <begin position="202"/>
        <end position="273"/>
    </location>
</feature>
<feature type="region of interest" description="Head domain (RuvB-H)" evidence="1">
    <location>
        <begin position="276"/>
        <end position="352"/>
    </location>
</feature>
<feature type="binding site" evidence="1">
    <location>
        <position position="37"/>
    </location>
    <ligand>
        <name>ATP</name>
        <dbReference type="ChEBI" id="CHEBI:30616"/>
    </ligand>
</feature>
<feature type="binding site" evidence="1">
    <location>
        <position position="41"/>
    </location>
    <ligand>
        <name>ATP</name>
        <dbReference type="ChEBI" id="CHEBI:30616"/>
    </ligand>
</feature>
<feature type="binding site" evidence="1">
    <location>
        <position position="82"/>
    </location>
    <ligand>
        <name>ATP</name>
        <dbReference type="ChEBI" id="CHEBI:30616"/>
    </ligand>
</feature>
<feature type="binding site" evidence="1">
    <location>
        <position position="85"/>
    </location>
    <ligand>
        <name>ATP</name>
        <dbReference type="ChEBI" id="CHEBI:30616"/>
    </ligand>
</feature>
<feature type="binding site" evidence="1">
    <location>
        <position position="86"/>
    </location>
    <ligand>
        <name>ATP</name>
        <dbReference type="ChEBI" id="CHEBI:30616"/>
    </ligand>
</feature>
<feature type="binding site" evidence="1">
    <location>
        <position position="86"/>
    </location>
    <ligand>
        <name>Mg(2+)</name>
        <dbReference type="ChEBI" id="CHEBI:18420"/>
    </ligand>
</feature>
<feature type="binding site" evidence="1">
    <location>
        <position position="87"/>
    </location>
    <ligand>
        <name>ATP</name>
        <dbReference type="ChEBI" id="CHEBI:30616"/>
    </ligand>
</feature>
<feature type="binding site" evidence="1">
    <location>
        <begin position="148"/>
        <end position="150"/>
    </location>
    <ligand>
        <name>ATP</name>
        <dbReference type="ChEBI" id="CHEBI:30616"/>
    </ligand>
</feature>
<feature type="binding site" evidence="1">
    <location>
        <position position="191"/>
    </location>
    <ligand>
        <name>ATP</name>
        <dbReference type="ChEBI" id="CHEBI:30616"/>
    </ligand>
</feature>
<feature type="binding site" evidence="1">
    <location>
        <position position="201"/>
    </location>
    <ligand>
        <name>ATP</name>
        <dbReference type="ChEBI" id="CHEBI:30616"/>
    </ligand>
</feature>
<feature type="binding site" evidence="1">
    <location>
        <position position="238"/>
    </location>
    <ligand>
        <name>ATP</name>
        <dbReference type="ChEBI" id="CHEBI:30616"/>
    </ligand>
</feature>
<feature type="binding site" evidence="1">
    <location>
        <position position="330"/>
    </location>
    <ligand>
        <name>DNA</name>
        <dbReference type="ChEBI" id="CHEBI:16991"/>
    </ligand>
</feature>
<feature type="binding site" evidence="1">
    <location>
        <position position="335"/>
    </location>
    <ligand>
        <name>DNA</name>
        <dbReference type="ChEBI" id="CHEBI:16991"/>
    </ligand>
</feature>
<accession>A2BZ00</accession>
<evidence type="ECO:0000255" key="1">
    <source>
        <dbReference type="HAMAP-Rule" id="MF_00016"/>
    </source>
</evidence>
<dbReference type="EC" id="3.6.4.-" evidence="1"/>
<dbReference type="EMBL" id="CP000552">
    <property type="protein sequence ID" value="ABM73011.1"/>
    <property type="molecule type" value="Genomic_DNA"/>
</dbReference>
<dbReference type="RefSeq" id="WP_011821096.1">
    <property type="nucleotide sequence ID" value="NC_008817.1"/>
</dbReference>
<dbReference type="SMR" id="A2BZ00"/>
<dbReference type="STRING" id="167542.P9515_18041"/>
<dbReference type="GeneID" id="60201943"/>
<dbReference type="KEGG" id="pmc:P9515_18041"/>
<dbReference type="eggNOG" id="COG2255">
    <property type="taxonomic scope" value="Bacteria"/>
</dbReference>
<dbReference type="HOGENOM" id="CLU_055599_1_0_3"/>
<dbReference type="OrthoDB" id="9804478at2"/>
<dbReference type="Proteomes" id="UP000001589">
    <property type="component" value="Chromosome"/>
</dbReference>
<dbReference type="GO" id="GO:0005737">
    <property type="term" value="C:cytoplasm"/>
    <property type="evidence" value="ECO:0007669"/>
    <property type="project" value="UniProtKB-SubCell"/>
</dbReference>
<dbReference type="GO" id="GO:0048476">
    <property type="term" value="C:Holliday junction resolvase complex"/>
    <property type="evidence" value="ECO:0007669"/>
    <property type="project" value="UniProtKB-UniRule"/>
</dbReference>
<dbReference type="GO" id="GO:0005524">
    <property type="term" value="F:ATP binding"/>
    <property type="evidence" value="ECO:0007669"/>
    <property type="project" value="UniProtKB-UniRule"/>
</dbReference>
<dbReference type="GO" id="GO:0016887">
    <property type="term" value="F:ATP hydrolysis activity"/>
    <property type="evidence" value="ECO:0007669"/>
    <property type="project" value="InterPro"/>
</dbReference>
<dbReference type="GO" id="GO:0000400">
    <property type="term" value="F:four-way junction DNA binding"/>
    <property type="evidence" value="ECO:0007669"/>
    <property type="project" value="UniProtKB-UniRule"/>
</dbReference>
<dbReference type="GO" id="GO:0009378">
    <property type="term" value="F:four-way junction helicase activity"/>
    <property type="evidence" value="ECO:0007669"/>
    <property type="project" value="InterPro"/>
</dbReference>
<dbReference type="GO" id="GO:0006310">
    <property type="term" value="P:DNA recombination"/>
    <property type="evidence" value="ECO:0007669"/>
    <property type="project" value="UniProtKB-UniRule"/>
</dbReference>
<dbReference type="GO" id="GO:0006281">
    <property type="term" value="P:DNA repair"/>
    <property type="evidence" value="ECO:0007669"/>
    <property type="project" value="UniProtKB-UniRule"/>
</dbReference>
<dbReference type="CDD" id="cd00009">
    <property type="entry name" value="AAA"/>
    <property type="match status" value="1"/>
</dbReference>
<dbReference type="Gene3D" id="1.10.8.60">
    <property type="match status" value="1"/>
</dbReference>
<dbReference type="Gene3D" id="3.40.50.300">
    <property type="entry name" value="P-loop containing nucleotide triphosphate hydrolases"/>
    <property type="match status" value="1"/>
</dbReference>
<dbReference type="Gene3D" id="1.10.10.10">
    <property type="entry name" value="Winged helix-like DNA-binding domain superfamily/Winged helix DNA-binding domain"/>
    <property type="match status" value="1"/>
</dbReference>
<dbReference type="HAMAP" id="MF_00016">
    <property type="entry name" value="DNA_HJ_migration_RuvB"/>
    <property type="match status" value="1"/>
</dbReference>
<dbReference type="InterPro" id="IPR003593">
    <property type="entry name" value="AAA+_ATPase"/>
</dbReference>
<dbReference type="InterPro" id="IPR041445">
    <property type="entry name" value="AAA_lid_4"/>
</dbReference>
<dbReference type="InterPro" id="IPR004605">
    <property type="entry name" value="DNA_helicase_Holl-junc_RuvB"/>
</dbReference>
<dbReference type="InterPro" id="IPR027417">
    <property type="entry name" value="P-loop_NTPase"/>
</dbReference>
<dbReference type="InterPro" id="IPR008824">
    <property type="entry name" value="RuvB-like_N"/>
</dbReference>
<dbReference type="InterPro" id="IPR008823">
    <property type="entry name" value="RuvB_C"/>
</dbReference>
<dbReference type="InterPro" id="IPR036388">
    <property type="entry name" value="WH-like_DNA-bd_sf"/>
</dbReference>
<dbReference type="InterPro" id="IPR036390">
    <property type="entry name" value="WH_DNA-bd_sf"/>
</dbReference>
<dbReference type="NCBIfam" id="NF000868">
    <property type="entry name" value="PRK00080.1"/>
    <property type="match status" value="1"/>
</dbReference>
<dbReference type="NCBIfam" id="TIGR00635">
    <property type="entry name" value="ruvB"/>
    <property type="match status" value="1"/>
</dbReference>
<dbReference type="PANTHER" id="PTHR42848">
    <property type="match status" value="1"/>
</dbReference>
<dbReference type="PANTHER" id="PTHR42848:SF1">
    <property type="entry name" value="HOLLIDAY JUNCTION BRANCH MIGRATION COMPLEX SUBUNIT RUVB"/>
    <property type="match status" value="1"/>
</dbReference>
<dbReference type="Pfam" id="PF17864">
    <property type="entry name" value="AAA_lid_4"/>
    <property type="match status" value="1"/>
</dbReference>
<dbReference type="Pfam" id="PF05491">
    <property type="entry name" value="RuvB_C"/>
    <property type="match status" value="1"/>
</dbReference>
<dbReference type="Pfam" id="PF05496">
    <property type="entry name" value="RuvB_N"/>
    <property type="match status" value="1"/>
</dbReference>
<dbReference type="SMART" id="SM00382">
    <property type="entry name" value="AAA"/>
    <property type="match status" value="1"/>
</dbReference>
<dbReference type="SUPFAM" id="SSF52540">
    <property type="entry name" value="P-loop containing nucleoside triphosphate hydrolases"/>
    <property type="match status" value="1"/>
</dbReference>
<dbReference type="SUPFAM" id="SSF46785">
    <property type="entry name" value="Winged helix' DNA-binding domain"/>
    <property type="match status" value="1"/>
</dbReference>